<feature type="chain" id="PRO_1000017017" description="Ribose-5-phosphate isomerase A">
    <location>
        <begin position="1"/>
        <end position="226"/>
    </location>
</feature>
<feature type="active site" description="Proton acceptor" evidence="1">
    <location>
        <position position="104"/>
    </location>
</feature>
<feature type="binding site" evidence="1">
    <location>
        <begin position="26"/>
        <end position="29"/>
    </location>
    <ligand>
        <name>substrate</name>
    </ligand>
</feature>
<feature type="binding site" evidence="1">
    <location>
        <begin position="82"/>
        <end position="85"/>
    </location>
    <ligand>
        <name>substrate</name>
    </ligand>
</feature>
<feature type="binding site" evidence="1">
    <location>
        <begin position="95"/>
        <end position="98"/>
    </location>
    <ligand>
        <name>substrate</name>
    </ligand>
</feature>
<feature type="binding site" evidence="1">
    <location>
        <position position="122"/>
    </location>
    <ligand>
        <name>substrate</name>
    </ligand>
</feature>
<name>RPIA_STRTD</name>
<comment type="function">
    <text evidence="1">Catalyzes the reversible conversion of ribose-5-phosphate to ribulose 5-phosphate.</text>
</comment>
<comment type="catalytic activity">
    <reaction evidence="1">
        <text>aldehydo-D-ribose 5-phosphate = D-ribulose 5-phosphate</text>
        <dbReference type="Rhea" id="RHEA:14657"/>
        <dbReference type="ChEBI" id="CHEBI:58121"/>
        <dbReference type="ChEBI" id="CHEBI:58273"/>
        <dbReference type="EC" id="5.3.1.6"/>
    </reaction>
</comment>
<comment type="pathway">
    <text evidence="1">Carbohydrate degradation; pentose phosphate pathway; D-ribose 5-phosphate from D-ribulose 5-phosphate (non-oxidative stage): step 1/1.</text>
</comment>
<comment type="subunit">
    <text evidence="1">Homodimer.</text>
</comment>
<comment type="similarity">
    <text evidence="1">Belongs to the ribose 5-phosphate isomerase family.</text>
</comment>
<sequence length="226" mass="24326">MDELKKLAGVYAAGFVEDGMVVGLGTGSTAYFFVEEIGRRIKEEGLSVVGVTTSTQTTKQAEGLGIPLKSVDDIDSIDVTVDGADEVDPQLNGIKGGGGALLMEKIVATPTKKYIWVVDESKMVDQLGAFKLPVEVVQYGADRLYLDFESKGYKPSFRVTEQGDRFVTDMKNFIIDLDLGKINNPVALGDELKAMTGVVEHGLFNGMVNKVIVAGKDGVKIVEVKD</sequence>
<accession>Q03KJ8</accession>
<evidence type="ECO:0000255" key="1">
    <source>
        <dbReference type="HAMAP-Rule" id="MF_00170"/>
    </source>
</evidence>
<gene>
    <name evidence="1" type="primary">rpiA</name>
    <name type="ordered locus">STER_1078</name>
</gene>
<organism>
    <name type="scientific">Streptococcus thermophilus (strain ATCC BAA-491 / LMD-9)</name>
    <dbReference type="NCBI Taxonomy" id="322159"/>
    <lineage>
        <taxon>Bacteria</taxon>
        <taxon>Bacillati</taxon>
        <taxon>Bacillota</taxon>
        <taxon>Bacilli</taxon>
        <taxon>Lactobacillales</taxon>
        <taxon>Streptococcaceae</taxon>
        <taxon>Streptococcus</taxon>
    </lineage>
</organism>
<protein>
    <recommendedName>
        <fullName evidence="1">Ribose-5-phosphate isomerase A</fullName>
        <ecNumber evidence="1">5.3.1.6</ecNumber>
    </recommendedName>
    <alternativeName>
        <fullName evidence="1">Phosphoriboisomerase A</fullName>
        <shortName evidence="1">PRI</shortName>
    </alternativeName>
</protein>
<reference key="1">
    <citation type="journal article" date="2006" name="Proc. Natl. Acad. Sci. U.S.A.">
        <title>Comparative genomics of the lactic acid bacteria.</title>
        <authorList>
            <person name="Makarova K.S."/>
            <person name="Slesarev A."/>
            <person name="Wolf Y.I."/>
            <person name="Sorokin A."/>
            <person name="Mirkin B."/>
            <person name="Koonin E.V."/>
            <person name="Pavlov A."/>
            <person name="Pavlova N."/>
            <person name="Karamychev V."/>
            <person name="Polouchine N."/>
            <person name="Shakhova V."/>
            <person name="Grigoriev I."/>
            <person name="Lou Y."/>
            <person name="Rohksar D."/>
            <person name="Lucas S."/>
            <person name="Huang K."/>
            <person name="Goodstein D.M."/>
            <person name="Hawkins T."/>
            <person name="Plengvidhya V."/>
            <person name="Welker D."/>
            <person name="Hughes J."/>
            <person name="Goh Y."/>
            <person name="Benson A."/>
            <person name="Baldwin K."/>
            <person name="Lee J.-H."/>
            <person name="Diaz-Muniz I."/>
            <person name="Dosti B."/>
            <person name="Smeianov V."/>
            <person name="Wechter W."/>
            <person name="Barabote R."/>
            <person name="Lorca G."/>
            <person name="Altermann E."/>
            <person name="Barrangou R."/>
            <person name="Ganesan B."/>
            <person name="Xie Y."/>
            <person name="Rawsthorne H."/>
            <person name="Tamir D."/>
            <person name="Parker C."/>
            <person name="Breidt F."/>
            <person name="Broadbent J.R."/>
            <person name="Hutkins R."/>
            <person name="O'Sullivan D."/>
            <person name="Steele J."/>
            <person name="Unlu G."/>
            <person name="Saier M.H. Jr."/>
            <person name="Klaenhammer T."/>
            <person name="Richardson P."/>
            <person name="Kozyavkin S."/>
            <person name="Weimer B.C."/>
            <person name="Mills D.A."/>
        </authorList>
    </citation>
    <scope>NUCLEOTIDE SEQUENCE [LARGE SCALE GENOMIC DNA]</scope>
    <source>
        <strain>ATCC BAA-491 / LMD-9</strain>
    </source>
</reference>
<proteinExistence type="inferred from homology"/>
<keyword id="KW-0413">Isomerase</keyword>
<dbReference type="EC" id="5.3.1.6" evidence="1"/>
<dbReference type="EMBL" id="CP000419">
    <property type="protein sequence ID" value="ABJ66274.1"/>
    <property type="molecule type" value="Genomic_DNA"/>
</dbReference>
<dbReference type="RefSeq" id="WP_002950867.1">
    <property type="nucleotide sequence ID" value="NC_008532.1"/>
</dbReference>
<dbReference type="SMR" id="Q03KJ8"/>
<dbReference type="GeneID" id="66898919"/>
<dbReference type="KEGG" id="ste:STER_1078"/>
<dbReference type="HOGENOM" id="CLU_056590_1_0_9"/>
<dbReference type="UniPathway" id="UPA00115">
    <property type="reaction ID" value="UER00412"/>
</dbReference>
<dbReference type="GO" id="GO:0004751">
    <property type="term" value="F:ribose-5-phosphate isomerase activity"/>
    <property type="evidence" value="ECO:0007669"/>
    <property type="project" value="UniProtKB-UniRule"/>
</dbReference>
<dbReference type="GO" id="GO:0009052">
    <property type="term" value="P:pentose-phosphate shunt, non-oxidative branch"/>
    <property type="evidence" value="ECO:0007669"/>
    <property type="project" value="UniProtKB-UniRule"/>
</dbReference>
<dbReference type="CDD" id="cd01398">
    <property type="entry name" value="RPI_A"/>
    <property type="match status" value="1"/>
</dbReference>
<dbReference type="FunFam" id="3.40.50.1360:FF:000001">
    <property type="entry name" value="Ribose-5-phosphate isomerase A"/>
    <property type="match status" value="1"/>
</dbReference>
<dbReference type="Gene3D" id="3.30.70.260">
    <property type="match status" value="1"/>
</dbReference>
<dbReference type="Gene3D" id="3.40.50.1360">
    <property type="match status" value="1"/>
</dbReference>
<dbReference type="HAMAP" id="MF_00170">
    <property type="entry name" value="Rib_5P_isom_A"/>
    <property type="match status" value="1"/>
</dbReference>
<dbReference type="InterPro" id="IPR037171">
    <property type="entry name" value="NagB/RpiA_transferase-like"/>
</dbReference>
<dbReference type="InterPro" id="IPR050262">
    <property type="entry name" value="Ribose-5P_isomerase"/>
</dbReference>
<dbReference type="InterPro" id="IPR020672">
    <property type="entry name" value="Ribose5P_isomerase_typA_subgr"/>
</dbReference>
<dbReference type="InterPro" id="IPR004788">
    <property type="entry name" value="Ribose5P_isomerase_type_A"/>
</dbReference>
<dbReference type="NCBIfam" id="NF001924">
    <property type="entry name" value="PRK00702.1"/>
    <property type="match status" value="1"/>
</dbReference>
<dbReference type="NCBIfam" id="TIGR00021">
    <property type="entry name" value="rpiA"/>
    <property type="match status" value="1"/>
</dbReference>
<dbReference type="PANTHER" id="PTHR43748">
    <property type="entry name" value="RIBOSE-5-PHOSPHATE ISOMERASE 3, CHLOROPLASTIC-RELATED"/>
    <property type="match status" value="1"/>
</dbReference>
<dbReference type="PANTHER" id="PTHR43748:SF3">
    <property type="entry name" value="RIBOSE-5-PHOSPHATE ISOMERASE 3, CHLOROPLASTIC-RELATED"/>
    <property type="match status" value="1"/>
</dbReference>
<dbReference type="Pfam" id="PF06026">
    <property type="entry name" value="Rib_5-P_isom_A"/>
    <property type="match status" value="1"/>
</dbReference>
<dbReference type="SUPFAM" id="SSF75445">
    <property type="entry name" value="D-ribose-5-phosphate isomerase (RpiA), lid domain"/>
    <property type="match status" value="1"/>
</dbReference>
<dbReference type="SUPFAM" id="SSF100950">
    <property type="entry name" value="NagB/RpiA/CoA transferase-like"/>
    <property type="match status" value="1"/>
</dbReference>